<sequence>MAKYKVGMVSLGCDKNRVDSEIMLGMVQNEYELTNNPKEADIIIVNTCGFIEKAKQESINTILDMAKYKTSHNCKLLIATGCLTQRYGDELLELMPEIDIMLGVNDYAKINEAIMNFINGNNEKVKATNYSDVSINEGLRLITTDKATAYLRIAEGCDNFCTYCIIPKIRGKFRSRALESIVEEAKKLAENGVKELILIAQDTTNYGIDIYGEKKLHLVLRELAKIEGIEWIRVLYCYPEAIYDELIKEISVNDKVCNYLDLPIQHISNNVLKRMGRKTTKEEIIGKINDLRKNVPNIVLRTSLIVGFPGESCEDFNELKDFIKTIKLDKVGVFTYSREEGTPAAIMEDQIDEEVKKAREEEIMLLQKEVSEEINKNKVGREYDVLIEKFNGEYYIGRSYEMAPDIDGCIYVKGNGAKKDQFCKVKIEKALEYDLVGVVCNESCK</sequence>
<reference key="1">
    <citation type="journal article" date="2002" name="Proc. Natl. Acad. Sci. U.S.A.">
        <title>Complete genome sequence of Clostridium perfringens, an anaerobic flesh-eater.</title>
        <authorList>
            <person name="Shimizu T."/>
            <person name="Ohtani K."/>
            <person name="Hirakawa H."/>
            <person name="Ohshima K."/>
            <person name="Yamashita A."/>
            <person name="Shiba T."/>
            <person name="Ogasawara N."/>
            <person name="Hattori M."/>
            <person name="Kuhara S."/>
            <person name="Hayashi H."/>
        </authorList>
    </citation>
    <scope>NUCLEOTIDE SEQUENCE [LARGE SCALE GENOMIC DNA]</scope>
    <source>
        <strain>13 / Type A</strain>
    </source>
</reference>
<organism>
    <name type="scientific">Clostridium perfringens (strain 13 / Type A)</name>
    <dbReference type="NCBI Taxonomy" id="195102"/>
    <lineage>
        <taxon>Bacteria</taxon>
        <taxon>Bacillati</taxon>
        <taxon>Bacillota</taxon>
        <taxon>Clostridia</taxon>
        <taxon>Eubacteriales</taxon>
        <taxon>Clostridiaceae</taxon>
        <taxon>Clostridium</taxon>
    </lineage>
</organism>
<name>RIMO_CLOPE</name>
<proteinExistence type="inferred from homology"/>
<evidence type="ECO:0000255" key="1">
    <source>
        <dbReference type="HAMAP-Rule" id="MF_01865"/>
    </source>
</evidence>
<evidence type="ECO:0000255" key="2">
    <source>
        <dbReference type="PROSITE-ProRule" id="PRU01266"/>
    </source>
</evidence>
<gene>
    <name evidence="1" type="primary">rimO</name>
    <name type="ordered locus">CPE1675</name>
</gene>
<keyword id="KW-0004">4Fe-4S</keyword>
<keyword id="KW-0963">Cytoplasm</keyword>
<keyword id="KW-0408">Iron</keyword>
<keyword id="KW-0411">Iron-sulfur</keyword>
<keyword id="KW-0479">Metal-binding</keyword>
<keyword id="KW-1185">Reference proteome</keyword>
<keyword id="KW-0949">S-adenosyl-L-methionine</keyword>
<keyword id="KW-0808">Transferase</keyword>
<dbReference type="EC" id="2.8.4.4" evidence="1"/>
<dbReference type="EMBL" id="BA000016">
    <property type="protein sequence ID" value="BAB81381.1"/>
    <property type="molecule type" value="Genomic_DNA"/>
</dbReference>
<dbReference type="RefSeq" id="WP_003459746.1">
    <property type="nucleotide sequence ID" value="NC_003366.1"/>
</dbReference>
<dbReference type="SMR" id="Q8XJS9"/>
<dbReference type="STRING" id="195102.gene:10490939"/>
<dbReference type="GeneID" id="93001787"/>
<dbReference type="KEGG" id="cpe:CPE1675"/>
<dbReference type="HOGENOM" id="CLU_018697_0_1_9"/>
<dbReference type="Proteomes" id="UP000000818">
    <property type="component" value="Chromosome"/>
</dbReference>
<dbReference type="GO" id="GO:0005829">
    <property type="term" value="C:cytosol"/>
    <property type="evidence" value="ECO:0007669"/>
    <property type="project" value="TreeGrafter"/>
</dbReference>
<dbReference type="GO" id="GO:0051539">
    <property type="term" value="F:4 iron, 4 sulfur cluster binding"/>
    <property type="evidence" value="ECO:0007669"/>
    <property type="project" value="UniProtKB-UniRule"/>
</dbReference>
<dbReference type="GO" id="GO:0035599">
    <property type="term" value="F:aspartic acid methylthiotransferase activity"/>
    <property type="evidence" value="ECO:0007669"/>
    <property type="project" value="TreeGrafter"/>
</dbReference>
<dbReference type="GO" id="GO:0046872">
    <property type="term" value="F:metal ion binding"/>
    <property type="evidence" value="ECO:0007669"/>
    <property type="project" value="UniProtKB-KW"/>
</dbReference>
<dbReference type="GO" id="GO:0103039">
    <property type="term" value="F:protein methylthiotransferase activity"/>
    <property type="evidence" value="ECO:0007669"/>
    <property type="project" value="UniProtKB-EC"/>
</dbReference>
<dbReference type="GO" id="GO:0006400">
    <property type="term" value="P:tRNA modification"/>
    <property type="evidence" value="ECO:0007669"/>
    <property type="project" value="InterPro"/>
</dbReference>
<dbReference type="CDD" id="cd01335">
    <property type="entry name" value="Radical_SAM"/>
    <property type="match status" value="1"/>
</dbReference>
<dbReference type="FunFam" id="3.80.30.20:FF:000001">
    <property type="entry name" value="tRNA-2-methylthio-N(6)-dimethylallyladenosine synthase 2"/>
    <property type="match status" value="1"/>
</dbReference>
<dbReference type="Gene3D" id="3.40.50.12160">
    <property type="entry name" value="Methylthiotransferase, N-terminal domain"/>
    <property type="match status" value="1"/>
</dbReference>
<dbReference type="Gene3D" id="2.40.50.140">
    <property type="entry name" value="Nucleic acid-binding proteins"/>
    <property type="match status" value="1"/>
</dbReference>
<dbReference type="Gene3D" id="3.80.30.20">
    <property type="entry name" value="tm_1862 like domain"/>
    <property type="match status" value="1"/>
</dbReference>
<dbReference type="HAMAP" id="MF_01865">
    <property type="entry name" value="MTTase_RimO"/>
    <property type="match status" value="1"/>
</dbReference>
<dbReference type="InterPro" id="IPR006638">
    <property type="entry name" value="Elp3/MiaA/NifB-like_rSAM"/>
</dbReference>
<dbReference type="InterPro" id="IPR005839">
    <property type="entry name" value="Methylthiotransferase"/>
</dbReference>
<dbReference type="InterPro" id="IPR020612">
    <property type="entry name" value="Methylthiotransferase_CS"/>
</dbReference>
<dbReference type="InterPro" id="IPR013848">
    <property type="entry name" value="Methylthiotransferase_N"/>
</dbReference>
<dbReference type="InterPro" id="IPR038135">
    <property type="entry name" value="Methylthiotransferase_N_sf"/>
</dbReference>
<dbReference type="InterPro" id="IPR012340">
    <property type="entry name" value="NA-bd_OB-fold"/>
</dbReference>
<dbReference type="InterPro" id="IPR005840">
    <property type="entry name" value="Ribosomal_uS12_MeSTrfase_RimO"/>
</dbReference>
<dbReference type="InterPro" id="IPR007197">
    <property type="entry name" value="rSAM"/>
</dbReference>
<dbReference type="InterPro" id="IPR023404">
    <property type="entry name" value="rSAM_horseshoe"/>
</dbReference>
<dbReference type="InterPro" id="IPR002792">
    <property type="entry name" value="TRAM_dom"/>
</dbReference>
<dbReference type="NCBIfam" id="TIGR01125">
    <property type="entry name" value="30S ribosomal protein S12 methylthiotransferase RimO"/>
    <property type="match status" value="1"/>
</dbReference>
<dbReference type="NCBIfam" id="TIGR00089">
    <property type="entry name" value="MiaB/RimO family radical SAM methylthiotransferase"/>
    <property type="match status" value="1"/>
</dbReference>
<dbReference type="PANTHER" id="PTHR43837">
    <property type="entry name" value="RIBOSOMAL PROTEIN S12 METHYLTHIOTRANSFERASE RIMO"/>
    <property type="match status" value="1"/>
</dbReference>
<dbReference type="PANTHER" id="PTHR43837:SF1">
    <property type="entry name" value="RIBOSOMAL PROTEIN US12 METHYLTHIOTRANSFERASE RIMO"/>
    <property type="match status" value="1"/>
</dbReference>
<dbReference type="Pfam" id="PF04055">
    <property type="entry name" value="Radical_SAM"/>
    <property type="match status" value="1"/>
</dbReference>
<dbReference type="Pfam" id="PF18693">
    <property type="entry name" value="TRAM_2"/>
    <property type="match status" value="1"/>
</dbReference>
<dbReference type="Pfam" id="PF00919">
    <property type="entry name" value="UPF0004"/>
    <property type="match status" value="1"/>
</dbReference>
<dbReference type="SFLD" id="SFLDG01082">
    <property type="entry name" value="B12-binding_domain_containing"/>
    <property type="match status" value="1"/>
</dbReference>
<dbReference type="SFLD" id="SFLDS00029">
    <property type="entry name" value="Radical_SAM"/>
    <property type="match status" value="1"/>
</dbReference>
<dbReference type="SFLD" id="SFLDF00274">
    <property type="entry name" value="ribosomal_protein_S12_methylth"/>
    <property type="match status" value="1"/>
</dbReference>
<dbReference type="SMART" id="SM00729">
    <property type="entry name" value="Elp3"/>
    <property type="match status" value="1"/>
</dbReference>
<dbReference type="SUPFAM" id="SSF102114">
    <property type="entry name" value="Radical SAM enzymes"/>
    <property type="match status" value="1"/>
</dbReference>
<dbReference type="PROSITE" id="PS51449">
    <property type="entry name" value="MTTASE_N"/>
    <property type="match status" value="1"/>
</dbReference>
<dbReference type="PROSITE" id="PS01278">
    <property type="entry name" value="MTTASE_RADICAL"/>
    <property type="match status" value="1"/>
</dbReference>
<dbReference type="PROSITE" id="PS51918">
    <property type="entry name" value="RADICAL_SAM"/>
    <property type="match status" value="1"/>
</dbReference>
<comment type="function">
    <text evidence="1">Catalyzes the methylthiolation of an aspartic acid residue of ribosomal protein uS12.</text>
</comment>
<comment type="catalytic activity">
    <reaction evidence="1">
        <text>L-aspartate(89)-[ribosomal protein uS12]-hydrogen + (sulfur carrier)-SH + AH2 + 2 S-adenosyl-L-methionine = 3-methylsulfanyl-L-aspartate(89)-[ribosomal protein uS12]-hydrogen + (sulfur carrier)-H + 5'-deoxyadenosine + L-methionine + A + S-adenosyl-L-homocysteine + 2 H(+)</text>
        <dbReference type="Rhea" id="RHEA:37087"/>
        <dbReference type="Rhea" id="RHEA-COMP:10460"/>
        <dbReference type="Rhea" id="RHEA-COMP:10461"/>
        <dbReference type="Rhea" id="RHEA-COMP:14737"/>
        <dbReference type="Rhea" id="RHEA-COMP:14739"/>
        <dbReference type="ChEBI" id="CHEBI:13193"/>
        <dbReference type="ChEBI" id="CHEBI:15378"/>
        <dbReference type="ChEBI" id="CHEBI:17319"/>
        <dbReference type="ChEBI" id="CHEBI:17499"/>
        <dbReference type="ChEBI" id="CHEBI:29917"/>
        <dbReference type="ChEBI" id="CHEBI:29961"/>
        <dbReference type="ChEBI" id="CHEBI:57844"/>
        <dbReference type="ChEBI" id="CHEBI:57856"/>
        <dbReference type="ChEBI" id="CHEBI:59789"/>
        <dbReference type="ChEBI" id="CHEBI:64428"/>
        <dbReference type="ChEBI" id="CHEBI:73599"/>
        <dbReference type="EC" id="2.8.4.4"/>
    </reaction>
</comment>
<comment type="cofactor">
    <cofactor evidence="1">
        <name>[4Fe-4S] cluster</name>
        <dbReference type="ChEBI" id="CHEBI:49883"/>
    </cofactor>
    <text evidence="1">Binds 2 [4Fe-4S] clusters. One cluster is coordinated with 3 cysteines and an exchangeable S-adenosyl-L-methionine.</text>
</comment>
<comment type="subcellular location">
    <subcellularLocation>
        <location evidence="1">Cytoplasm</location>
    </subcellularLocation>
</comment>
<comment type="similarity">
    <text evidence="1">Belongs to the methylthiotransferase family. RimO subfamily.</text>
</comment>
<protein>
    <recommendedName>
        <fullName evidence="1">Ribosomal protein uS12 methylthiotransferase RimO</fullName>
        <shortName evidence="1">uS12 MTTase</shortName>
        <shortName evidence="1">uS12 methylthiotransferase</shortName>
        <ecNumber evidence="1">2.8.4.4</ecNumber>
    </recommendedName>
    <alternativeName>
        <fullName evidence="1">Ribosomal protein uS12 (aspartate-C(3))-methylthiotransferase</fullName>
    </alternativeName>
    <alternativeName>
        <fullName evidence="1">Ribosome maturation factor RimO</fullName>
    </alternativeName>
</protein>
<feature type="chain" id="PRO_0000374786" description="Ribosomal protein uS12 methylthiotransferase RimO">
    <location>
        <begin position="1"/>
        <end position="445"/>
    </location>
</feature>
<feature type="domain" description="MTTase N-terminal" evidence="1">
    <location>
        <begin position="4"/>
        <end position="119"/>
    </location>
</feature>
<feature type="domain" description="Radical SAM core" evidence="2">
    <location>
        <begin position="143"/>
        <end position="373"/>
    </location>
</feature>
<feature type="domain" description="TRAM" evidence="1">
    <location>
        <begin position="376"/>
        <end position="441"/>
    </location>
</feature>
<feature type="binding site" evidence="1">
    <location>
        <position position="13"/>
    </location>
    <ligand>
        <name>[4Fe-4S] cluster</name>
        <dbReference type="ChEBI" id="CHEBI:49883"/>
        <label>1</label>
    </ligand>
</feature>
<feature type="binding site" evidence="1">
    <location>
        <position position="48"/>
    </location>
    <ligand>
        <name>[4Fe-4S] cluster</name>
        <dbReference type="ChEBI" id="CHEBI:49883"/>
        <label>1</label>
    </ligand>
</feature>
<feature type="binding site" evidence="1">
    <location>
        <position position="82"/>
    </location>
    <ligand>
        <name>[4Fe-4S] cluster</name>
        <dbReference type="ChEBI" id="CHEBI:49883"/>
        <label>1</label>
    </ligand>
</feature>
<feature type="binding site" evidence="1">
    <location>
        <position position="157"/>
    </location>
    <ligand>
        <name>[4Fe-4S] cluster</name>
        <dbReference type="ChEBI" id="CHEBI:49883"/>
        <label>2</label>
        <note>4Fe-4S-S-AdoMet</note>
    </ligand>
</feature>
<feature type="binding site" evidence="1">
    <location>
        <position position="161"/>
    </location>
    <ligand>
        <name>[4Fe-4S] cluster</name>
        <dbReference type="ChEBI" id="CHEBI:49883"/>
        <label>2</label>
        <note>4Fe-4S-S-AdoMet</note>
    </ligand>
</feature>
<feature type="binding site" evidence="1">
    <location>
        <position position="164"/>
    </location>
    <ligand>
        <name>[4Fe-4S] cluster</name>
        <dbReference type="ChEBI" id="CHEBI:49883"/>
        <label>2</label>
        <note>4Fe-4S-S-AdoMet</note>
    </ligand>
</feature>
<accession>Q8XJS9</accession>